<feature type="chain" id="PRO_1000128368" description="Small ribosomal subunit protein uS14">
    <location>
        <begin position="1"/>
        <end position="101"/>
    </location>
</feature>
<feature type="region of interest" description="Disordered" evidence="2">
    <location>
        <begin position="46"/>
        <end position="72"/>
    </location>
</feature>
<feature type="compositionally biased region" description="Basic and acidic residues" evidence="2">
    <location>
        <begin position="61"/>
        <end position="70"/>
    </location>
</feature>
<evidence type="ECO:0000255" key="1">
    <source>
        <dbReference type="HAMAP-Rule" id="MF_00537"/>
    </source>
</evidence>
<evidence type="ECO:0000256" key="2">
    <source>
        <dbReference type="SAM" id="MobiDB-lite"/>
    </source>
</evidence>
<evidence type="ECO:0000305" key="3"/>
<proteinExistence type="inferred from homology"/>
<organism>
    <name type="scientific">Corynebacterium diphtheriae (strain ATCC 700971 / NCTC 13129 / Biotype gravis)</name>
    <dbReference type="NCBI Taxonomy" id="257309"/>
    <lineage>
        <taxon>Bacteria</taxon>
        <taxon>Bacillati</taxon>
        <taxon>Actinomycetota</taxon>
        <taxon>Actinomycetes</taxon>
        <taxon>Mycobacteriales</taxon>
        <taxon>Corynebacteriaceae</taxon>
        <taxon>Corynebacterium</taxon>
    </lineage>
</organism>
<sequence>MAKKSKIAKNEQRKEVVARFAERRNELKAIIKNPNTSDEDRLDAQFELNRQPRDASPVRVRNRDSRDGRPRGFLRKFGVSRVRMREMAHRGELPGVRKSSW</sequence>
<keyword id="KW-1185">Reference proteome</keyword>
<keyword id="KW-0687">Ribonucleoprotein</keyword>
<keyword id="KW-0689">Ribosomal protein</keyword>
<keyword id="KW-0694">RNA-binding</keyword>
<keyword id="KW-0699">rRNA-binding</keyword>
<accession>Q6NIC8</accession>
<name>RS14_CORDI</name>
<dbReference type="EMBL" id="BX248356">
    <property type="protein sequence ID" value="CAE49365.1"/>
    <property type="molecule type" value="Genomic_DNA"/>
</dbReference>
<dbReference type="RefSeq" id="WP_003850743.1">
    <property type="nucleotide sequence ID" value="NC_002935.2"/>
</dbReference>
<dbReference type="SMR" id="Q6NIC8"/>
<dbReference type="STRING" id="257309.DIP0849"/>
<dbReference type="GeneID" id="97331557"/>
<dbReference type="KEGG" id="cdi:DIP0849"/>
<dbReference type="HOGENOM" id="CLU_139869_0_1_11"/>
<dbReference type="Proteomes" id="UP000002198">
    <property type="component" value="Chromosome"/>
</dbReference>
<dbReference type="GO" id="GO:0015935">
    <property type="term" value="C:small ribosomal subunit"/>
    <property type="evidence" value="ECO:0007669"/>
    <property type="project" value="TreeGrafter"/>
</dbReference>
<dbReference type="GO" id="GO:0019843">
    <property type="term" value="F:rRNA binding"/>
    <property type="evidence" value="ECO:0007669"/>
    <property type="project" value="UniProtKB-UniRule"/>
</dbReference>
<dbReference type="GO" id="GO:0003735">
    <property type="term" value="F:structural constituent of ribosome"/>
    <property type="evidence" value="ECO:0007669"/>
    <property type="project" value="InterPro"/>
</dbReference>
<dbReference type="GO" id="GO:0006412">
    <property type="term" value="P:translation"/>
    <property type="evidence" value="ECO:0007669"/>
    <property type="project" value="UniProtKB-UniRule"/>
</dbReference>
<dbReference type="FunFam" id="1.10.287.1480:FF:000001">
    <property type="entry name" value="30S ribosomal protein S14"/>
    <property type="match status" value="1"/>
</dbReference>
<dbReference type="Gene3D" id="1.10.287.1480">
    <property type="match status" value="1"/>
</dbReference>
<dbReference type="HAMAP" id="MF_00537">
    <property type="entry name" value="Ribosomal_uS14_1"/>
    <property type="match status" value="1"/>
</dbReference>
<dbReference type="InterPro" id="IPR001209">
    <property type="entry name" value="Ribosomal_uS14"/>
</dbReference>
<dbReference type="InterPro" id="IPR023036">
    <property type="entry name" value="Ribosomal_uS14_bac/plastid"/>
</dbReference>
<dbReference type="NCBIfam" id="NF006477">
    <property type="entry name" value="PRK08881.1"/>
    <property type="match status" value="1"/>
</dbReference>
<dbReference type="PANTHER" id="PTHR19836">
    <property type="entry name" value="30S RIBOSOMAL PROTEIN S14"/>
    <property type="match status" value="1"/>
</dbReference>
<dbReference type="PANTHER" id="PTHR19836:SF23">
    <property type="entry name" value="SMALL RIBOSOMAL SUBUNIT PROTEIN US14A"/>
    <property type="match status" value="1"/>
</dbReference>
<dbReference type="Pfam" id="PF00253">
    <property type="entry name" value="Ribosomal_S14"/>
    <property type="match status" value="1"/>
</dbReference>
<dbReference type="SUPFAM" id="SSF57716">
    <property type="entry name" value="Glucocorticoid receptor-like (DNA-binding domain)"/>
    <property type="match status" value="1"/>
</dbReference>
<gene>
    <name evidence="1" type="primary">rpsN</name>
    <name type="ordered locus">DIP0849</name>
</gene>
<reference key="1">
    <citation type="journal article" date="2003" name="Nucleic Acids Res.">
        <title>The complete genome sequence and analysis of Corynebacterium diphtheriae NCTC13129.</title>
        <authorList>
            <person name="Cerdeno-Tarraga A.-M."/>
            <person name="Efstratiou A."/>
            <person name="Dover L.G."/>
            <person name="Holden M.T.G."/>
            <person name="Pallen M.J."/>
            <person name="Bentley S.D."/>
            <person name="Besra G.S."/>
            <person name="Churcher C.M."/>
            <person name="James K.D."/>
            <person name="De Zoysa A."/>
            <person name="Chillingworth T."/>
            <person name="Cronin A."/>
            <person name="Dowd L."/>
            <person name="Feltwell T."/>
            <person name="Hamlin N."/>
            <person name="Holroyd S."/>
            <person name="Jagels K."/>
            <person name="Moule S."/>
            <person name="Quail M.A."/>
            <person name="Rabbinowitsch E."/>
            <person name="Rutherford K.M."/>
            <person name="Thomson N.R."/>
            <person name="Unwin L."/>
            <person name="Whitehead S."/>
            <person name="Barrell B.G."/>
            <person name="Parkhill J."/>
        </authorList>
    </citation>
    <scope>NUCLEOTIDE SEQUENCE [LARGE SCALE GENOMIC DNA]</scope>
    <source>
        <strain>ATCC 700971 / NCTC 13129 / Biotype gravis</strain>
    </source>
</reference>
<comment type="function">
    <text evidence="1">Binds 16S rRNA, required for the assembly of 30S particles and may also be responsible for determining the conformation of the 16S rRNA at the A site.</text>
</comment>
<comment type="subunit">
    <text evidence="1">Part of the 30S ribosomal subunit. Contacts proteins S3 and S10.</text>
</comment>
<comment type="similarity">
    <text evidence="1">Belongs to the universal ribosomal protein uS14 family.</text>
</comment>
<protein>
    <recommendedName>
        <fullName evidence="1">Small ribosomal subunit protein uS14</fullName>
    </recommendedName>
    <alternativeName>
        <fullName evidence="3">30S ribosomal protein S14</fullName>
    </alternativeName>
</protein>